<proteinExistence type="evidence at protein level"/>
<reference key="1">
    <citation type="journal article" date="1997" name="Cell">
        <title>Cloning and crystal structure of hematopoietic prostaglandin D synthase.</title>
        <authorList>
            <person name="Kanaoka Y."/>
            <person name="Ago H."/>
            <person name="Inagaki E."/>
            <person name="Nanayama T."/>
            <person name="Miyano M."/>
            <person name="Kikuno R."/>
            <person name="Fujii Y."/>
            <person name="Eguchi N."/>
            <person name="Toh H."/>
            <person name="Urade Y."/>
            <person name="Hayaishi O."/>
        </authorList>
    </citation>
    <scope>NUCLEOTIDE SEQUENCE [MRNA]</scope>
    <scope>X-RAY CRYSTALLOGRAPHY (2.3 ANGSTROMS) IN COMPLEX WITH GLUTATHIONE</scope>
    <scope>FUNCTION</scope>
    <scope>CATALYTIC ACTIVITY</scope>
    <scope>SUBUNIT</scope>
    <scope>TISSUE SPECIFICITY</scope>
    <source>
        <strain>Sprague-Dawley</strain>
        <tissue>Spleen</tissue>
    </source>
</reference>
<reference key="2">
    <citation type="journal article" date="2001" name="Biochem. J.">
        <title>Mammalian class Sigma glutathione S-transferases: catalytic properties and tissue-specific expression of human and rat GSH-dependent prostaglandin D2 synthases.</title>
        <authorList>
            <person name="Jowsey I.R."/>
            <person name="Thomson A.M."/>
            <person name="Flanagan J.U."/>
            <person name="Murdock P.R."/>
            <person name="Moore G.B."/>
            <person name="Meyer D.J."/>
            <person name="Murphy G.J."/>
            <person name="Smith S.A."/>
            <person name="Hayes J.D."/>
        </authorList>
    </citation>
    <scope>NUCLEOTIDE SEQUENCE [MRNA]</scope>
    <scope>FUNCTION</scope>
    <scope>CATALYTIC ACTIVITY</scope>
    <scope>COFACTOR</scope>
    <scope>BIOPHYSICOCHEMICAL PROPERTIES</scope>
    <scope>TISSUE SPECIFICITY</scope>
    <source>
        <tissue>Spleen</tissue>
    </source>
</reference>
<reference key="3">
    <citation type="journal article" date="2004" name="Genome Res.">
        <title>The status, quality, and expansion of the NIH full-length cDNA project: the Mammalian Gene Collection (MGC).</title>
        <authorList>
            <consortium name="The MGC Project Team"/>
        </authorList>
    </citation>
    <scope>NUCLEOTIDE SEQUENCE [LARGE SCALE MRNA]</scope>
    <source>
        <tissue>Ovary</tissue>
    </source>
</reference>
<reference key="4">
    <citation type="submission" date="1997-08" db="EMBL/GenBank/DDBJ databases">
        <title>Purification and cloning of rat glutathione-dependent prostaglandin D synthase.</title>
        <authorList>
            <person name="Yuan Y."/>
            <person name="Reddy R.G."/>
            <person name="Kim H."/>
        </authorList>
    </citation>
    <scope>NUCLEOTIDE SEQUENCE [MRNA] OF 39-198</scope>
    <source>
        <strain>Sprague-Dawley</strain>
        <tissue>Spleen</tissue>
    </source>
</reference>
<reference key="5">
    <citation type="journal article" date="2000" name="J. Biol. Chem.">
        <title>Structural basis of hematopoietic prostaglandin D synthase activity elucidated by site-directed mutagenesis.</title>
        <authorList>
            <person name="Pinzar E."/>
            <person name="Miyano M."/>
            <person name="Kanaoka Y."/>
            <person name="Urade Y."/>
            <person name="Hayaishi O."/>
        </authorList>
    </citation>
    <scope>FUNCTION</scope>
    <scope>CATALYTIC ACTIVITY</scope>
    <scope>COFACTOR</scope>
    <scope>BIOPHYSICOCHEMICAL PROPERTIES</scope>
    <scope>MUTAGENESIS OF TYR-8; ARG-14; TRP-104; LYS-112; TYR-152; CYS-156; LYS-198 AND LEU-199</scope>
</reference>
<reference key="6">
    <citation type="journal article" date="2006" name="J. Biol. Chem.">
        <title>Structural and functional characterization of HQL-79, an orally selective inhibitor of human hematopoietic prostaglandin D synthase.</title>
        <authorList>
            <person name="Aritake K."/>
            <person name="Kado Y."/>
            <person name="Inoue T."/>
            <person name="Miyano M."/>
            <person name="Urade Y."/>
        </authorList>
    </citation>
    <scope>FUNCTION</scope>
    <scope>CATALYTIC ACTIVITY</scope>
</reference>
<keyword id="KW-0002">3D-structure</keyword>
<keyword id="KW-0963">Cytoplasm</keyword>
<keyword id="KW-0275">Fatty acid biosynthesis</keyword>
<keyword id="KW-0276">Fatty acid metabolism</keyword>
<keyword id="KW-0413">Isomerase</keyword>
<keyword id="KW-0444">Lipid biosynthesis</keyword>
<keyword id="KW-0443">Lipid metabolism</keyword>
<keyword id="KW-0643">Prostaglandin biosynthesis</keyword>
<keyword id="KW-0644">Prostaglandin metabolism</keyword>
<keyword id="KW-1185">Reference proteome</keyword>
<keyword id="KW-0808">Transferase</keyword>
<evidence type="ECO:0000250" key="1">
    <source>
        <dbReference type="UniProtKB" id="O60760"/>
    </source>
</evidence>
<evidence type="ECO:0000269" key="2">
    <source>
    </source>
</evidence>
<evidence type="ECO:0000269" key="3">
    <source>
    </source>
</evidence>
<evidence type="ECO:0000269" key="4">
    <source>
    </source>
</evidence>
<evidence type="ECO:0000269" key="5">
    <source>
    </source>
</evidence>
<evidence type="ECO:0000305" key="6"/>
<evidence type="ECO:0000312" key="7">
    <source>
        <dbReference type="RGD" id="69251"/>
    </source>
</evidence>
<evidence type="ECO:0007829" key="8">
    <source>
        <dbReference type="PDB" id="5Y9Z"/>
    </source>
</evidence>
<accession>O35543</accession>
<accession>O35351</accession>
<protein>
    <recommendedName>
        <fullName>Hematopoietic prostaglandin D synthase</fullName>
        <shortName>H-PGDS</shortName>
        <ecNumber evidence="2 3 4 5">5.3.99.2</ecNumber>
    </recommendedName>
    <alternativeName>
        <fullName>GST class-sigma</fullName>
    </alternativeName>
    <alternativeName>
        <fullName>Glutathione S-transferase</fullName>
        <ecNumber evidence="2 3 5">2.5.1.18</ecNumber>
    </alternativeName>
    <alternativeName>
        <fullName>Glutathione-dependent PGD synthase</fullName>
    </alternativeName>
    <alternativeName>
        <fullName>Glutathione-requiring prostaglandin D synthase</fullName>
    </alternativeName>
    <alternativeName>
        <fullName>Prostaglandin-H2 D-isomerase</fullName>
    </alternativeName>
</protein>
<dbReference type="EC" id="5.3.99.2" evidence="2 3 4 5"/>
<dbReference type="EC" id="2.5.1.18" evidence="2 3 5"/>
<dbReference type="EMBL" id="D82071">
    <property type="protein sequence ID" value="BAA22898.1"/>
    <property type="molecule type" value="mRNA"/>
</dbReference>
<dbReference type="EMBL" id="BC087590">
    <property type="protein sequence ID" value="AAH87590.1"/>
    <property type="molecule type" value="mRNA"/>
</dbReference>
<dbReference type="EMBL" id="AF021882">
    <property type="protein sequence ID" value="AAB72099.1"/>
    <property type="status" value="ALT_FRAME"/>
    <property type="molecule type" value="mRNA"/>
</dbReference>
<dbReference type="RefSeq" id="NP_113832.1">
    <property type="nucleotide sequence ID" value="NM_031644.2"/>
</dbReference>
<dbReference type="PDB" id="1PD2">
    <property type="method" value="X-ray"/>
    <property type="resolution" value="2.30 A"/>
    <property type="chains" value="1/2=1-199"/>
</dbReference>
<dbReference type="PDB" id="5Y9Z">
    <property type="method" value="X-ray"/>
    <property type="resolution" value="1.09 A"/>
    <property type="chains" value="A/B=1-199"/>
</dbReference>
<dbReference type="PDB" id="6N69">
    <property type="method" value="X-ray"/>
    <property type="resolution" value="2.00 A"/>
    <property type="chains" value="A/B=1-199"/>
</dbReference>
<dbReference type="PDBsum" id="1PD2"/>
<dbReference type="PDBsum" id="5Y9Z"/>
<dbReference type="PDBsum" id="6N69"/>
<dbReference type="SMR" id="O35543"/>
<dbReference type="FunCoup" id="O35543">
    <property type="interactions" value="128"/>
</dbReference>
<dbReference type="STRING" id="10116.ENSRNOP00000008826"/>
<dbReference type="BindingDB" id="O35543"/>
<dbReference type="ChEMBL" id="CHEMBL4523131"/>
<dbReference type="PhosphoSitePlus" id="O35543"/>
<dbReference type="PaxDb" id="10116-ENSRNOP00000008826"/>
<dbReference type="Ensembl" id="ENSRNOT00000008826.6">
    <property type="protein sequence ID" value="ENSRNOP00000008826.3"/>
    <property type="gene ID" value="ENSRNOG00000006583.6"/>
</dbReference>
<dbReference type="GeneID" id="58962"/>
<dbReference type="KEGG" id="rno:58962"/>
<dbReference type="UCSC" id="RGD:69251">
    <property type="organism name" value="rat"/>
</dbReference>
<dbReference type="AGR" id="RGD:69251"/>
<dbReference type="CTD" id="27306"/>
<dbReference type="RGD" id="69251">
    <property type="gene designation" value="Hpgds"/>
</dbReference>
<dbReference type="eggNOG" id="KOG1695">
    <property type="taxonomic scope" value="Eukaryota"/>
</dbReference>
<dbReference type="GeneTree" id="ENSGT00940000160278"/>
<dbReference type="HOGENOM" id="CLU_039475_1_0_1"/>
<dbReference type="InParanoid" id="O35543"/>
<dbReference type="OMA" id="DIRIEWH"/>
<dbReference type="OrthoDB" id="414243at2759"/>
<dbReference type="PhylomeDB" id="O35543"/>
<dbReference type="TreeFam" id="TF105321"/>
<dbReference type="BRENDA" id="5.3.99.2">
    <property type="organism ID" value="5301"/>
</dbReference>
<dbReference type="Reactome" id="R-RNO-156590">
    <property type="pathway name" value="Glutathione conjugation"/>
</dbReference>
<dbReference type="Reactome" id="R-RNO-2162123">
    <property type="pathway name" value="Synthesis of Prostaglandins (PG) and Thromboxanes (TX)"/>
</dbReference>
<dbReference type="SABIO-RK" id="O35543"/>
<dbReference type="EvolutionaryTrace" id="O35543"/>
<dbReference type="PRO" id="PR:O35543"/>
<dbReference type="Proteomes" id="UP000002494">
    <property type="component" value="Chromosome 4"/>
</dbReference>
<dbReference type="Bgee" id="ENSRNOG00000006583">
    <property type="expression patterns" value="Expressed in spleen and 15 other cell types or tissues"/>
</dbReference>
<dbReference type="GO" id="GO:0005737">
    <property type="term" value="C:cytoplasm"/>
    <property type="evidence" value="ECO:0007669"/>
    <property type="project" value="UniProtKB-SubCell"/>
</dbReference>
<dbReference type="GO" id="GO:0005509">
    <property type="term" value="F:calcium ion binding"/>
    <property type="evidence" value="ECO:0000250"/>
    <property type="project" value="UniProtKB"/>
</dbReference>
<dbReference type="GO" id="GO:0004364">
    <property type="term" value="F:glutathione transferase activity"/>
    <property type="evidence" value="ECO:0000318"/>
    <property type="project" value="GO_Central"/>
</dbReference>
<dbReference type="GO" id="GO:0000287">
    <property type="term" value="F:magnesium ion binding"/>
    <property type="evidence" value="ECO:0000250"/>
    <property type="project" value="UniProtKB"/>
</dbReference>
<dbReference type="GO" id="GO:0004667">
    <property type="term" value="F:prostaglandin-D synthase activity"/>
    <property type="evidence" value="ECO:0000250"/>
    <property type="project" value="UniProtKB"/>
</dbReference>
<dbReference type="GO" id="GO:0042803">
    <property type="term" value="F:protein homodimerization activity"/>
    <property type="evidence" value="ECO:0000266"/>
    <property type="project" value="RGD"/>
</dbReference>
<dbReference type="GO" id="GO:0006749">
    <property type="term" value="P:glutathione metabolic process"/>
    <property type="evidence" value="ECO:0000318"/>
    <property type="project" value="GO_Central"/>
</dbReference>
<dbReference type="GO" id="GO:2000255">
    <property type="term" value="P:negative regulation of male germ cell proliferation"/>
    <property type="evidence" value="ECO:0000266"/>
    <property type="project" value="RGD"/>
</dbReference>
<dbReference type="GO" id="GO:0001516">
    <property type="term" value="P:prostaglandin biosynthetic process"/>
    <property type="evidence" value="ECO:0000304"/>
    <property type="project" value="RGD"/>
</dbReference>
<dbReference type="GO" id="GO:0006693">
    <property type="term" value="P:prostaglandin metabolic process"/>
    <property type="evidence" value="ECO:0000250"/>
    <property type="project" value="UniProtKB"/>
</dbReference>
<dbReference type="GO" id="GO:0009624">
    <property type="term" value="P:response to nematode"/>
    <property type="evidence" value="ECO:0000266"/>
    <property type="project" value="RGD"/>
</dbReference>
<dbReference type="GO" id="GO:0010269">
    <property type="term" value="P:response to selenium ion"/>
    <property type="evidence" value="ECO:0000266"/>
    <property type="project" value="RGD"/>
</dbReference>
<dbReference type="CDD" id="cd10295">
    <property type="entry name" value="GST_C_Sigma"/>
    <property type="match status" value="1"/>
</dbReference>
<dbReference type="CDD" id="cd03039">
    <property type="entry name" value="GST_N_Sigma_like"/>
    <property type="match status" value="1"/>
</dbReference>
<dbReference type="FunFam" id="1.20.1050.10:FF:000035">
    <property type="entry name" value="Hematopoietic prostaglandin D synthase"/>
    <property type="match status" value="1"/>
</dbReference>
<dbReference type="FunFam" id="3.40.30.10:FF:000035">
    <property type="entry name" value="hematopoietic prostaglandin D synthase"/>
    <property type="match status" value="1"/>
</dbReference>
<dbReference type="Gene3D" id="1.20.1050.10">
    <property type="match status" value="1"/>
</dbReference>
<dbReference type="Gene3D" id="3.40.30.10">
    <property type="entry name" value="Glutaredoxin"/>
    <property type="match status" value="1"/>
</dbReference>
<dbReference type="InterPro" id="IPR010987">
    <property type="entry name" value="Glutathione-S-Trfase_C-like"/>
</dbReference>
<dbReference type="InterPro" id="IPR036282">
    <property type="entry name" value="Glutathione-S-Trfase_C_sf"/>
</dbReference>
<dbReference type="InterPro" id="IPR040079">
    <property type="entry name" value="Glutathione_S-Trfase"/>
</dbReference>
<dbReference type="InterPro" id="IPR004045">
    <property type="entry name" value="Glutathione_S-Trfase_N"/>
</dbReference>
<dbReference type="InterPro" id="IPR004046">
    <property type="entry name" value="GST_C"/>
</dbReference>
<dbReference type="InterPro" id="IPR050213">
    <property type="entry name" value="GST_superfamily"/>
</dbReference>
<dbReference type="InterPro" id="IPR036249">
    <property type="entry name" value="Thioredoxin-like_sf"/>
</dbReference>
<dbReference type="PANTHER" id="PTHR11571">
    <property type="entry name" value="GLUTATHIONE S-TRANSFERASE"/>
    <property type="match status" value="1"/>
</dbReference>
<dbReference type="PANTHER" id="PTHR11571:SF224">
    <property type="entry name" value="HEMATOPOIETIC PROSTAGLANDIN D SYNTHASE"/>
    <property type="match status" value="1"/>
</dbReference>
<dbReference type="Pfam" id="PF14497">
    <property type="entry name" value="GST_C_3"/>
    <property type="match status" value="1"/>
</dbReference>
<dbReference type="Pfam" id="PF02798">
    <property type="entry name" value="GST_N"/>
    <property type="match status" value="1"/>
</dbReference>
<dbReference type="SFLD" id="SFLDG01205">
    <property type="entry name" value="AMPS.1"/>
    <property type="match status" value="1"/>
</dbReference>
<dbReference type="SFLD" id="SFLDS00019">
    <property type="entry name" value="Glutathione_Transferase_(cytos"/>
    <property type="match status" value="1"/>
</dbReference>
<dbReference type="SUPFAM" id="SSF47616">
    <property type="entry name" value="GST C-terminal domain-like"/>
    <property type="match status" value="1"/>
</dbReference>
<dbReference type="SUPFAM" id="SSF52833">
    <property type="entry name" value="Thioredoxin-like"/>
    <property type="match status" value="1"/>
</dbReference>
<dbReference type="PROSITE" id="PS50405">
    <property type="entry name" value="GST_CTER"/>
    <property type="match status" value="1"/>
</dbReference>
<dbReference type="PROSITE" id="PS50404">
    <property type="entry name" value="GST_NTER"/>
    <property type="match status" value="1"/>
</dbReference>
<comment type="function">
    <text evidence="2 3 4 5">Bifunctional enzyme which catalyzes both the conversion of PGH2 to PGD2, a prostaglandin involved in smooth muscle contraction/relaxation and a potent inhibitor of platelet aggregation, and the conjugation of glutathione with a wide range of aryl halides and organic isothiocyanates. Also exhibits low glutathione-peroxidase activity towards cumene hydroperoxide.</text>
</comment>
<comment type="catalytic activity">
    <reaction evidence="2 3 4 5">
        <text>prostaglandin H2 = prostaglandin D2</text>
        <dbReference type="Rhea" id="RHEA:10600"/>
        <dbReference type="ChEBI" id="CHEBI:57405"/>
        <dbReference type="ChEBI" id="CHEBI:57406"/>
        <dbReference type="EC" id="5.3.99.2"/>
    </reaction>
    <physiologicalReaction direction="left-to-right" evidence="6">
        <dbReference type="Rhea" id="RHEA:10601"/>
    </physiologicalReaction>
</comment>
<comment type="catalytic activity">
    <reaction evidence="2 3 5">
        <text>RX + glutathione = an S-substituted glutathione + a halide anion + H(+)</text>
        <dbReference type="Rhea" id="RHEA:16437"/>
        <dbReference type="ChEBI" id="CHEBI:15378"/>
        <dbReference type="ChEBI" id="CHEBI:16042"/>
        <dbReference type="ChEBI" id="CHEBI:17792"/>
        <dbReference type="ChEBI" id="CHEBI:57925"/>
        <dbReference type="ChEBI" id="CHEBI:90779"/>
        <dbReference type="EC" id="2.5.1.18"/>
    </reaction>
</comment>
<comment type="catalytic activity">
    <reaction evidence="1">
        <text>2-glyceryl-prostaglandin H2 = 2-glyceryl-prostaglandin D2</text>
        <dbReference type="Rhea" id="RHEA:51232"/>
        <dbReference type="ChEBI" id="CHEBI:85166"/>
        <dbReference type="ChEBI" id="CHEBI:133979"/>
    </reaction>
    <physiologicalReaction direction="left-to-right" evidence="1">
        <dbReference type="Rhea" id="RHEA:51233"/>
    </physiologicalReaction>
</comment>
<comment type="cofactor">
    <cofactor evidence="2 3">
        <name>glutathione</name>
        <dbReference type="ChEBI" id="CHEBI:57925"/>
    </cofactor>
    <text evidence="2 3">Glutathione is required for the prostaglandin D synthase activity.</text>
</comment>
<comment type="biophysicochemical properties">
    <kinetics>
        <KM evidence="2 3">100 uM for glutathione for the prostaglandin D synthase activity</KM>
        <KM evidence="2 3">500 uM for glutathione for the glutathione-conjugating activity</KM>
        <KM evidence="2 3">500 uM for PGH2 for the prostaglandin D synthase activity</KM>
        <KM evidence="2 3">3 mM for 1-chloro-2,4-dinitrobenzene</KM>
        <Vmax evidence="2 3">17.6 umol/min/mg enzyme with 1-bromo-2,4-dinitrobenzene as substrate</Vmax>
        <Vmax evidence="2 3">9.2 umol/min/mg enzyme with 1-chloro-2,4-dinitrobenzene as substrate</Vmax>
        <Vmax evidence="2 3">48.3 umol/min/mg enzyme with 1-fluoro-2,4-dinitrobenzene as substrate</Vmax>
        <Vmax evidence="2 3">17.9 umol/min/mg enzyme with 1-iodo-2,4-dinitrobenzene as substrate</Vmax>
        <Vmax evidence="2 3">0.35 umol/min/mg enzyme with cumene hydroperoxide as substrate</Vmax>
        <Vmax evidence="2 3">10.2 umol/min/mg enzyme with allyl isothiocyanate as substrate</Vmax>
        <Vmax evidence="2 3">11.3 umol/min/mg enzyme with benzyl isothiocyanate as substrate</Vmax>
    </kinetics>
</comment>
<comment type="subunit">
    <text evidence="5">Homodimer.</text>
</comment>
<comment type="subcellular location">
    <subcellularLocation>
        <location>Cytoplasm</location>
    </subcellularLocation>
</comment>
<comment type="tissue specificity">
    <text evidence="3 5">Highly expressed in spleen and bone marrow. Lower levels of expression in small intestine, colon, liver, pancreas and skin. Not detected in brain, heart, lung or kidney (at protein level).</text>
</comment>
<comment type="similarity">
    <text evidence="6">Belongs to the GST superfamily. Sigma family.</text>
</comment>
<comment type="sequence caution" evidence="6">
    <conflict type="frameshift">
        <sequence resource="EMBL-CDS" id="AAB72099"/>
    </conflict>
</comment>
<feature type="chain" id="PRO_0000185936" description="Hematopoietic prostaglandin D synthase">
    <location>
        <begin position="1"/>
        <end position="199"/>
    </location>
</feature>
<feature type="domain" description="GST N-terminal">
    <location>
        <begin position="2"/>
        <end position="79"/>
    </location>
</feature>
<feature type="domain" description="GST C-terminal">
    <location>
        <begin position="81"/>
        <end position="199"/>
    </location>
</feature>
<feature type="binding site" evidence="5">
    <location>
        <position position="8"/>
    </location>
    <ligand>
        <name>glutathione</name>
        <dbReference type="ChEBI" id="CHEBI:57925"/>
    </ligand>
</feature>
<feature type="binding site" evidence="5">
    <location>
        <position position="14"/>
    </location>
    <ligand>
        <name>glutathione</name>
        <dbReference type="ChEBI" id="CHEBI:57925"/>
    </ligand>
</feature>
<feature type="binding site" evidence="5">
    <location>
        <position position="39"/>
    </location>
    <ligand>
        <name>glutathione</name>
        <dbReference type="ChEBI" id="CHEBI:57925"/>
    </ligand>
</feature>
<feature type="binding site" evidence="5">
    <location>
        <begin position="49"/>
        <end position="51"/>
    </location>
    <ligand>
        <name>glutathione</name>
        <dbReference type="ChEBI" id="CHEBI:57925"/>
    </ligand>
</feature>
<feature type="binding site" evidence="5">
    <location>
        <begin position="63"/>
        <end position="64"/>
    </location>
    <ligand>
        <name>glutathione</name>
        <dbReference type="ChEBI" id="CHEBI:57925"/>
    </ligand>
</feature>
<feature type="mutagenesis site" description="Moderate reduction of protein expression levels. Abolishes both prostaglandin D synthase and glutathione-conjugating activities." evidence="2">
    <original>Y</original>
    <variation>F</variation>
    <location>
        <position position="8"/>
    </location>
</feature>
<feature type="mutagenesis site" description="Moderate reduction of protein expression levels. Abolishes both prostaglandin D synthase and glutathione-conjugating activities." evidence="2">
    <original>R</original>
    <variation>E</variation>
    <location>
        <position position="14"/>
    </location>
</feature>
<feature type="mutagenesis site" description="Moderate reduction of protein expression levels. Abolishes both prostaglandin D synthase and glutathione-conjugating activities." evidence="2">
    <original>R</original>
    <variation>K</variation>
    <location>
        <position position="14"/>
    </location>
</feature>
<feature type="mutagenesis site" description="No significant effect on protein expression levels. Abolishes both prostaglandin D synthase and glutathione-conjugating activities." evidence="2">
    <original>W</original>
    <variation>I</variation>
    <location>
        <position position="104"/>
    </location>
</feature>
<feature type="mutagenesis site" description="Significant reduction of protein expression levels. Significantly reduces prostaglandin D synthase and moderately reduces glutathione-conjugating activities." evidence="2">
    <original>K</original>
    <variation>E</variation>
    <location>
        <position position="112"/>
    </location>
</feature>
<feature type="mutagenesis site" description="Significant reduction of protein expression levels. Moderately reduces prostaglandin D synthase activity." evidence="2">
    <original>Y</original>
    <variation>F</variation>
    <location>
        <position position="152"/>
    </location>
</feature>
<feature type="mutagenesis site" description="No significant effect on protein expression levels. Abolishes prostaglandin D synthase and significantly reduces glutathione-conjugating activities." evidence="2">
    <original>C</original>
    <variation>L</variation>
    <location>
        <position position="156"/>
    </location>
</feature>
<feature type="mutagenesis site" description="Significant reduction of protein expression levels. Abolishes prostaglandin D synthase and significantly reduces glutathione-conjugating activities." evidence="2">
    <original>C</original>
    <variation>Y</variation>
    <location>
        <position position="156"/>
    </location>
</feature>
<feature type="mutagenesis site" description="Moderate reduction of protein expression levels. No significant effect on catalytic activities." evidence="2">
    <original>K</original>
    <variation>E</variation>
    <location>
        <position position="198"/>
    </location>
</feature>
<feature type="mutagenesis site" description="Moderate reduction of protein expression levels. No significant effect on catalytic activities." evidence="2">
    <original>L</original>
    <variation>F</variation>
    <location>
        <position position="199"/>
    </location>
</feature>
<feature type="sequence conflict" description="In Ref. 4; AAB72099." evidence="6" ref="4">
    <original>R</original>
    <variation>S</variation>
    <location>
        <position position="194"/>
    </location>
</feature>
<feature type="strand" evidence="8">
    <location>
        <begin position="5"/>
        <end position="12"/>
    </location>
</feature>
<feature type="helix" evidence="8">
    <location>
        <begin position="13"/>
        <end position="15"/>
    </location>
</feature>
<feature type="helix" evidence="8">
    <location>
        <begin position="16"/>
        <end position="25"/>
    </location>
</feature>
<feature type="strand" evidence="8">
    <location>
        <begin position="30"/>
        <end position="34"/>
    </location>
</feature>
<feature type="helix" evidence="8">
    <location>
        <begin position="36"/>
        <end position="38"/>
    </location>
</feature>
<feature type="helix" evidence="8">
    <location>
        <begin position="39"/>
        <end position="42"/>
    </location>
</feature>
<feature type="helix" evidence="8">
    <location>
        <begin position="43"/>
        <end position="45"/>
    </location>
</feature>
<feature type="strand" evidence="8">
    <location>
        <begin position="53"/>
        <end position="56"/>
    </location>
</feature>
<feature type="strand" evidence="8">
    <location>
        <begin position="59"/>
        <end position="62"/>
    </location>
</feature>
<feature type="helix" evidence="8">
    <location>
        <begin position="64"/>
        <end position="72"/>
    </location>
</feature>
<feature type="helix" evidence="8">
    <location>
        <begin position="76"/>
        <end position="78"/>
    </location>
</feature>
<feature type="helix" evidence="8">
    <location>
        <begin position="82"/>
        <end position="99"/>
    </location>
</feature>
<feature type="helix" evidence="8">
    <location>
        <begin position="109"/>
        <end position="121"/>
    </location>
</feature>
<feature type="helix" evidence="8">
    <location>
        <begin position="124"/>
        <end position="135"/>
    </location>
</feature>
<feature type="strand" evidence="8">
    <location>
        <begin position="143"/>
        <end position="145"/>
    </location>
</feature>
<feature type="helix" evidence="8">
    <location>
        <begin position="148"/>
        <end position="163"/>
    </location>
</feature>
<feature type="turn" evidence="8">
    <location>
        <begin position="165"/>
        <end position="170"/>
    </location>
</feature>
<feature type="helix" evidence="8">
    <location>
        <begin position="172"/>
        <end position="182"/>
    </location>
</feature>
<feature type="helix" evidence="8">
    <location>
        <begin position="185"/>
        <end position="193"/>
    </location>
</feature>
<sequence length="199" mass="23297">MPNYKLLYFNMRGRAEIIRYIFAYLDIKYEDHRIEQADWPKIKPTLPFGKIPVLEVEGLTLHQSLAIARYLTKNTDLAGKTELEQCQVDAVVDTLDDFMSLFPWAEENQDLKERTFNDLLTRQAPHLLKDLDTYLGDKEWFIGNYVTWADFYWDICSTTLLVLKPDLLGIYPRLVSLRNKVQAIPAISAWILKRPQTKL</sequence>
<organism>
    <name type="scientific">Rattus norvegicus</name>
    <name type="common">Rat</name>
    <dbReference type="NCBI Taxonomy" id="10116"/>
    <lineage>
        <taxon>Eukaryota</taxon>
        <taxon>Metazoa</taxon>
        <taxon>Chordata</taxon>
        <taxon>Craniata</taxon>
        <taxon>Vertebrata</taxon>
        <taxon>Euteleostomi</taxon>
        <taxon>Mammalia</taxon>
        <taxon>Eutheria</taxon>
        <taxon>Euarchontoglires</taxon>
        <taxon>Glires</taxon>
        <taxon>Rodentia</taxon>
        <taxon>Myomorpha</taxon>
        <taxon>Muroidea</taxon>
        <taxon>Muridae</taxon>
        <taxon>Murinae</taxon>
        <taxon>Rattus</taxon>
    </lineage>
</organism>
<gene>
    <name evidence="7" type="primary">Hpgds</name>
    <name type="synonym">Gsts</name>
    <name type="synonym">Pgds</name>
    <name type="synonym">Ptgds2</name>
</gene>
<name>HPGDS_RAT</name>